<name>MRAY_NOVAD</name>
<sequence>MLYLLAQWLHFEGFSNLIRYQTFRAGATLLTALVIGLIIGPRFINMLRVRQGKGQPIREDGPQSHLAKRGTPTMGGLMIVTALTLSLLLWMDVTSRLVWACAVVTLGFGLIGFLDDYDKVTKYAHKGVPAKVRLAGEFVVAAFAAWLAVGETNLYVPVFSNLYVPLGPFYYLFAIFVIVGAGNAVNLTDGLDGLAIMPVIIAAGTFAIIAYLAGRYDFATYLGIPHVKGAGELAIFCAAMMGAGLAFLWFNAPPAAVFMGDTGSLALGGALGVIAVAAHHEIVLAIVGGLFVMEAVSVIVQVAVYKRTGKRVFRMAPIHHHFEQLGWKESTVVIRFWIVSIVLALIGLATLKVR</sequence>
<keyword id="KW-0131">Cell cycle</keyword>
<keyword id="KW-0132">Cell division</keyword>
<keyword id="KW-0997">Cell inner membrane</keyword>
<keyword id="KW-1003">Cell membrane</keyword>
<keyword id="KW-0133">Cell shape</keyword>
<keyword id="KW-0961">Cell wall biogenesis/degradation</keyword>
<keyword id="KW-0460">Magnesium</keyword>
<keyword id="KW-0472">Membrane</keyword>
<keyword id="KW-0479">Metal-binding</keyword>
<keyword id="KW-0573">Peptidoglycan synthesis</keyword>
<keyword id="KW-1185">Reference proteome</keyword>
<keyword id="KW-0808">Transferase</keyword>
<keyword id="KW-0812">Transmembrane</keyword>
<keyword id="KW-1133">Transmembrane helix</keyword>
<gene>
    <name evidence="1" type="primary">mraY</name>
    <name type="ordered locus">Saro_1130</name>
</gene>
<evidence type="ECO:0000255" key="1">
    <source>
        <dbReference type="HAMAP-Rule" id="MF_00038"/>
    </source>
</evidence>
<proteinExistence type="inferred from homology"/>
<dbReference type="EC" id="2.7.8.13" evidence="1"/>
<dbReference type="EMBL" id="CP000248">
    <property type="protein sequence ID" value="ABD25575.1"/>
    <property type="molecule type" value="Genomic_DNA"/>
</dbReference>
<dbReference type="RefSeq" id="WP_011444789.1">
    <property type="nucleotide sequence ID" value="NC_007794.1"/>
</dbReference>
<dbReference type="SMR" id="Q2G998"/>
<dbReference type="STRING" id="279238.Saro_1130"/>
<dbReference type="KEGG" id="nar:Saro_1130"/>
<dbReference type="eggNOG" id="COG0472">
    <property type="taxonomic scope" value="Bacteria"/>
</dbReference>
<dbReference type="HOGENOM" id="CLU_023982_0_0_5"/>
<dbReference type="UniPathway" id="UPA00219"/>
<dbReference type="Proteomes" id="UP000009134">
    <property type="component" value="Chromosome"/>
</dbReference>
<dbReference type="GO" id="GO:0005886">
    <property type="term" value="C:plasma membrane"/>
    <property type="evidence" value="ECO:0007669"/>
    <property type="project" value="UniProtKB-SubCell"/>
</dbReference>
<dbReference type="GO" id="GO:0046872">
    <property type="term" value="F:metal ion binding"/>
    <property type="evidence" value="ECO:0007669"/>
    <property type="project" value="UniProtKB-KW"/>
</dbReference>
<dbReference type="GO" id="GO:0008963">
    <property type="term" value="F:phospho-N-acetylmuramoyl-pentapeptide-transferase activity"/>
    <property type="evidence" value="ECO:0007669"/>
    <property type="project" value="UniProtKB-UniRule"/>
</dbReference>
<dbReference type="GO" id="GO:0051992">
    <property type="term" value="F:UDP-N-acetylmuramoyl-L-alanyl-D-glutamyl-meso-2,6-diaminopimelyl-D-alanyl-D-alanine:undecaprenyl-phosphate transferase activity"/>
    <property type="evidence" value="ECO:0007669"/>
    <property type="project" value="RHEA"/>
</dbReference>
<dbReference type="GO" id="GO:0051301">
    <property type="term" value="P:cell division"/>
    <property type="evidence" value="ECO:0007669"/>
    <property type="project" value="UniProtKB-KW"/>
</dbReference>
<dbReference type="GO" id="GO:0071555">
    <property type="term" value="P:cell wall organization"/>
    <property type="evidence" value="ECO:0007669"/>
    <property type="project" value="UniProtKB-KW"/>
</dbReference>
<dbReference type="GO" id="GO:0009252">
    <property type="term" value="P:peptidoglycan biosynthetic process"/>
    <property type="evidence" value="ECO:0007669"/>
    <property type="project" value="UniProtKB-UniRule"/>
</dbReference>
<dbReference type="GO" id="GO:0008360">
    <property type="term" value="P:regulation of cell shape"/>
    <property type="evidence" value="ECO:0007669"/>
    <property type="project" value="UniProtKB-KW"/>
</dbReference>
<dbReference type="CDD" id="cd06852">
    <property type="entry name" value="GT_MraY"/>
    <property type="match status" value="1"/>
</dbReference>
<dbReference type="HAMAP" id="MF_00038">
    <property type="entry name" value="MraY"/>
    <property type="match status" value="1"/>
</dbReference>
<dbReference type="InterPro" id="IPR000715">
    <property type="entry name" value="Glycosyl_transferase_4"/>
</dbReference>
<dbReference type="InterPro" id="IPR003524">
    <property type="entry name" value="PNAcMuramoyl-5peptid_Trfase"/>
</dbReference>
<dbReference type="InterPro" id="IPR018480">
    <property type="entry name" value="PNAcMuramoyl-5peptid_Trfase_CS"/>
</dbReference>
<dbReference type="NCBIfam" id="TIGR00445">
    <property type="entry name" value="mraY"/>
    <property type="match status" value="1"/>
</dbReference>
<dbReference type="PANTHER" id="PTHR22926">
    <property type="entry name" value="PHOSPHO-N-ACETYLMURAMOYL-PENTAPEPTIDE-TRANSFERASE"/>
    <property type="match status" value="1"/>
</dbReference>
<dbReference type="PANTHER" id="PTHR22926:SF5">
    <property type="entry name" value="PHOSPHO-N-ACETYLMURAMOYL-PENTAPEPTIDE-TRANSFERASE HOMOLOG"/>
    <property type="match status" value="1"/>
</dbReference>
<dbReference type="Pfam" id="PF00953">
    <property type="entry name" value="Glycos_transf_4"/>
    <property type="match status" value="1"/>
</dbReference>
<dbReference type="Pfam" id="PF10555">
    <property type="entry name" value="MraY_sig1"/>
    <property type="match status" value="1"/>
</dbReference>
<dbReference type="PROSITE" id="PS01347">
    <property type="entry name" value="MRAY_1"/>
    <property type="match status" value="1"/>
</dbReference>
<dbReference type="PROSITE" id="PS01348">
    <property type="entry name" value="MRAY_2"/>
    <property type="match status" value="1"/>
</dbReference>
<accession>Q2G998</accession>
<reference key="1">
    <citation type="submission" date="2006-01" db="EMBL/GenBank/DDBJ databases">
        <title>Complete sequence of Novosphingobium aromaticivorans DSM 12444.</title>
        <authorList>
            <consortium name="US DOE Joint Genome Institute"/>
            <person name="Copeland A."/>
            <person name="Lucas S."/>
            <person name="Lapidus A."/>
            <person name="Barry K."/>
            <person name="Detter J.C."/>
            <person name="Glavina T."/>
            <person name="Hammon N."/>
            <person name="Israni S."/>
            <person name="Pitluck S."/>
            <person name="Chain P."/>
            <person name="Malfatti S."/>
            <person name="Shin M."/>
            <person name="Vergez L."/>
            <person name="Schmutz J."/>
            <person name="Larimer F."/>
            <person name="Land M."/>
            <person name="Kyrpides N."/>
            <person name="Ivanova N."/>
            <person name="Fredrickson J."/>
            <person name="Balkwill D."/>
            <person name="Romine M.F."/>
            <person name="Richardson P."/>
        </authorList>
    </citation>
    <scope>NUCLEOTIDE SEQUENCE [LARGE SCALE GENOMIC DNA]</scope>
    <source>
        <strain>ATCC 700278 / DSM 12444 / CCUG 56034 / CIP 105152 / NBRC 16084 / F199</strain>
    </source>
</reference>
<protein>
    <recommendedName>
        <fullName evidence="1">Phospho-N-acetylmuramoyl-pentapeptide-transferase</fullName>
        <ecNumber evidence="1">2.7.8.13</ecNumber>
    </recommendedName>
    <alternativeName>
        <fullName evidence="1">UDP-MurNAc-pentapeptide phosphotransferase</fullName>
    </alternativeName>
</protein>
<comment type="function">
    <text evidence="1">Catalyzes the initial step of the lipid cycle reactions in the biosynthesis of the cell wall peptidoglycan: transfers peptidoglycan precursor phospho-MurNAc-pentapeptide from UDP-MurNAc-pentapeptide onto the lipid carrier undecaprenyl phosphate, yielding undecaprenyl-pyrophosphoryl-MurNAc-pentapeptide, known as lipid I.</text>
</comment>
<comment type="catalytic activity">
    <reaction evidence="1">
        <text>UDP-N-acetyl-alpha-D-muramoyl-L-alanyl-gamma-D-glutamyl-meso-2,6-diaminopimeloyl-D-alanyl-D-alanine + di-trans,octa-cis-undecaprenyl phosphate = di-trans,octa-cis-undecaprenyl diphospho-N-acetyl-alpha-D-muramoyl-L-alanyl-D-glutamyl-meso-2,6-diaminopimeloyl-D-alanyl-D-alanine + UMP</text>
        <dbReference type="Rhea" id="RHEA:28386"/>
        <dbReference type="ChEBI" id="CHEBI:57865"/>
        <dbReference type="ChEBI" id="CHEBI:60392"/>
        <dbReference type="ChEBI" id="CHEBI:61386"/>
        <dbReference type="ChEBI" id="CHEBI:61387"/>
        <dbReference type="EC" id="2.7.8.13"/>
    </reaction>
</comment>
<comment type="cofactor">
    <cofactor evidence="1">
        <name>Mg(2+)</name>
        <dbReference type="ChEBI" id="CHEBI:18420"/>
    </cofactor>
</comment>
<comment type="pathway">
    <text evidence="1">Cell wall biogenesis; peptidoglycan biosynthesis.</text>
</comment>
<comment type="subcellular location">
    <subcellularLocation>
        <location evidence="1">Cell inner membrane</location>
        <topology evidence="1">Multi-pass membrane protein</topology>
    </subcellularLocation>
</comment>
<comment type="similarity">
    <text evidence="1">Belongs to the glycosyltransferase 4 family. MraY subfamily.</text>
</comment>
<feature type="chain" id="PRO_0000235462" description="Phospho-N-acetylmuramoyl-pentapeptide-transferase">
    <location>
        <begin position="1"/>
        <end position="354"/>
    </location>
</feature>
<feature type="transmembrane region" description="Helical" evidence="1">
    <location>
        <begin position="27"/>
        <end position="47"/>
    </location>
</feature>
<feature type="transmembrane region" description="Helical" evidence="1">
    <location>
        <begin position="73"/>
        <end position="93"/>
    </location>
</feature>
<feature type="transmembrane region" description="Helical" evidence="1">
    <location>
        <begin position="97"/>
        <end position="117"/>
    </location>
</feature>
<feature type="transmembrane region" description="Helical" evidence="1">
    <location>
        <begin position="138"/>
        <end position="158"/>
    </location>
</feature>
<feature type="transmembrane region" description="Helical" evidence="1">
    <location>
        <begin position="162"/>
        <end position="182"/>
    </location>
</feature>
<feature type="transmembrane region" description="Helical" evidence="1">
    <location>
        <begin position="193"/>
        <end position="213"/>
    </location>
</feature>
<feature type="transmembrane region" description="Helical" evidence="1">
    <location>
        <begin position="230"/>
        <end position="250"/>
    </location>
</feature>
<feature type="transmembrane region" description="Helical" evidence="1">
    <location>
        <begin position="256"/>
        <end position="276"/>
    </location>
</feature>
<feature type="transmembrane region" description="Helical" evidence="1">
    <location>
        <begin position="282"/>
        <end position="302"/>
    </location>
</feature>
<feature type="transmembrane region" description="Helical" evidence="1">
    <location>
        <begin position="331"/>
        <end position="351"/>
    </location>
</feature>
<organism>
    <name type="scientific">Novosphingobium aromaticivorans (strain ATCC 700278 / DSM 12444 / CCUG 56034 / CIP 105152 / NBRC 16084 / F199)</name>
    <dbReference type="NCBI Taxonomy" id="279238"/>
    <lineage>
        <taxon>Bacteria</taxon>
        <taxon>Pseudomonadati</taxon>
        <taxon>Pseudomonadota</taxon>
        <taxon>Alphaproteobacteria</taxon>
        <taxon>Sphingomonadales</taxon>
        <taxon>Sphingomonadaceae</taxon>
        <taxon>Novosphingobium</taxon>
    </lineage>
</organism>